<keyword id="KW-0106">Calcium</keyword>
<keyword id="KW-0256">Endoplasmic reticulum</keyword>
<keyword id="KW-0325">Glycoprotein</keyword>
<keyword id="KW-0333">Golgi apparatus</keyword>
<keyword id="KW-0472">Membrane</keyword>
<keyword id="KW-0479">Metal-binding</keyword>
<keyword id="KW-1185">Reference proteome</keyword>
<keyword id="KW-0677">Repeat</keyword>
<keyword id="KW-0703">Sarcoplasmic reticulum</keyword>
<keyword id="KW-0964">Secreted</keyword>
<keyword id="KW-0732">Signal</keyword>
<organism>
    <name type="scientific">Salmo salar</name>
    <name type="common">Atlantic salmon</name>
    <dbReference type="NCBI Taxonomy" id="8030"/>
    <lineage>
        <taxon>Eukaryota</taxon>
        <taxon>Metazoa</taxon>
        <taxon>Chordata</taxon>
        <taxon>Craniata</taxon>
        <taxon>Vertebrata</taxon>
        <taxon>Euteleostomi</taxon>
        <taxon>Actinopterygii</taxon>
        <taxon>Neopterygii</taxon>
        <taxon>Teleostei</taxon>
        <taxon>Protacanthopterygii</taxon>
        <taxon>Salmoniformes</taxon>
        <taxon>Salmonidae</taxon>
        <taxon>Salmoninae</taxon>
        <taxon>Salmo</taxon>
    </lineage>
</organism>
<accession>B5X4E0</accession>
<proteinExistence type="evidence at transcript level"/>
<comment type="function">
    <text evidence="1">Involved in regulation of vitamin K-dependent carboxylation of multiple N-terminal glutamate residues. Seems to inhibit gamma-carboxylase ggcx. Binds 7 calcium ions with a low affinity (By similarity).</text>
</comment>
<comment type="subunit">
    <text evidence="1">Interacts with ggcx.</text>
</comment>
<comment type="subcellular location">
    <subcellularLocation>
        <location evidence="2">Endoplasmic reticulum membrane</location>
    </subcellularLocation>
    <subcellularLocation>
        <location evidence="2">Golgi apparatus</location>
    </subcellularLocation>
    <subcellularLocation>
        <location evidence="2">Secreted</location>
    </subcellularLocation>
    <subcellularLocation>
        <location evidence="2">Melanosome</location>
    </subcellularLocation>
    <subcellularLocation>
        <location evidence="2">Sarcoplasmic reticulum lumen</location>
    </subcellularLocation>
</comment>
<comment type="similarity">
    <text evidence="5">Belongs to the CREC family.</text>
</comment>
<protein>
    <recommendedName>
        <fullName>Calumenin-B</fullName>
    </recommendedName>
</protein>
<gene>
    <name type="primary">calub</name>
</gene>
<dbReference type="EMBL" id="BT045909">
    <property type="protein sequence ID" value="ACI34171.1"/>
    <property type="molecule type" value="mRNA"/>
</dbReference>
<dbReference type="SMR" id="B5X4E0"/>
<dbReference type="STRING" id="8030.ENSSSAP00000016223"/>
<dbReference type="GlyCosmos" id="B5X4E0">
    <property type="glycosylation" value="1 site, No reported glycans"/>
</dbReference>
<dbReference type="PaxDb" id="8030-ENSSSAP00000016223"/>
<dbReference type="Ensembl" id="ENSSSAT00020154711">
    <property type="protein sequence ID" value="ENSSSAP00020118725"/>
    <property type="gene ID" value="ENSSSAG00020066630"/>
</dbReference>
<dbReference type="Ensembl" id="ENSSSAT00070056279">
    <property type="protein sequence ID" value="ENSSSAP00070054052"/>
    <property type="gene ID" value="ENSSSAG00070035081"/>
</dbReference>
<dbReference type="Ensembl" id="ENSSSAT00075048524">
    <property type="protein sequence ID" value="ENSSSAP00075033932"/>
    <property type="gene ID" value="ENSSSAG00075023346"/>
</dbReference>
<dbReference type="GeneID" id="106573432"/>
<dbReference type="KEGG" id="sasa:106573432"/>
<dbReference type="OrthoDB" id="460454at7898"/>
<dbReference type="Proteomes" id="UP000087266">
    <property type="component" value="Chromosome ssa16"/>
</dbReference>
<dbReference type="Bgee" id="ENSSSAG00000007784">
    <property type="expression patterns" value="Expressed in testis and 23 other cell types or tissues"/>
</dbReference>
<dbReference type="GO" id="GO:0005789">
    <property type="term" value="C:endoplasmic reticulum membrane"/>
    <property type="evidence" value="ECO:0007669"/>
    <property type="project" value="UniProtKB-SubCell"/>
</dbReference>
<dbReference type="GO" id="GO:0005576">
    <property type="term" value="C:extracellular region"/>
    <property type="evidence" value="ECO:0007669"/>
    <property type="project" value="UniProtKB-SubCell"/>
</dbReference>
<dbReference type="GO" id="GO:0005794">
    <property type="term" value="C:Golgi apparatus"/>
    <property type="evidence" value="ECO:0007669"/>
    <property type="project" value="UniProtKB-SubCell"/>
</dbReference>
<dbReference type="GO" id="GO:0042470">
    <property type="term" value="C:melanosome"/>
    <property type="evidence" value="ECO:0007669"/>
    <property type="project" value="UniProtKB-SubCell"/>
</dbReference>
<dbReference type="GO" id="GO:0033018">
    <property type="term" value="C:sarcoplasmic reticulum lumen"/>
    <property type="evidence" value="ECO:0007669"/>
    <property type="project" value="UniProtKB-SubCell"/>
</dbReference>
<dbReference type="GO" id="GO:0005509">
    <property type="term" value="F:calcium ion binding"/>
    <property type="evidence" value="ECO:0007669"/>
    <property type="project" value="InterPro"/>
</dbReference>
<dbReference type="FunFam" id="1.10.238.10:FF:000090">
    <property type="entry name" value="calumenin isoform X2"/>
    <property type="match status" value="1"/>
</dbReference>
<dbReference type="FunFam" id="1.10.238.10:FF:000109">
    <property type="entry name" value="calumenin isoform X2"/>
    <property type="match status" value="1"/>
</dbReference>
<dbReference type="FunFam" id="1.10.238.10:FF:000110">
    <property type="entry name" value="calumenin isoform X2"/>
    <property type="match status" value="1"/>
</dbReference>
<dbReference type="Gene3D" id="1.10.238.10">
    <property type="entry name" value="EF-hand"/>
    <property type="match status" value="3"/>
</dbReference>
<dbReference type="InterPro" id="IPR011992">
    <property type="entry name" value="EF-hand-dom_pair"/>
</dbReference>
<dbReference type="InterPro" id="IPR018247">
    <property type="entry name" value="EF_Hand_1_Ca_BS"/>
</dbReference>
<dbReference type="InterPro" id="IPR002048">
    <property type="entry name" value="EF_hand_dom"/>
</dbReference>
<dbReference type="PANTHER" id="PTHR10827:SF87">
    <property type="entry name" value="CALUMENIN-B"/>
    <property type="match status" value="1"/>
</dbReference>
<dbReference type="PANTHER" id="PTHR10827">
    <property type="entry name" value="RETICULOCALBIN"/>
    <property type="match status" value="1"/>
</dbReference>
<dbReference type="Pfam" id="PF13202">
    <property type="entry name" value="EF-hand_5"/>
    <property type="match status" value="2"/>
</dbReference>
<dbReference type="Pfam" id="PF13833">
    <property type="entry name" value="EF-hand_8"/>
    <property type="match status" value="1"/>
</dbReference>
<dbReference type="SMART" id="SM00054">
    <property type="entry name" value="EFh"/>
    <property type="match status" value="3"/>
</dbReference>
<dbReference type="SUPFAM" id="SSF47473">
    <property type="entry name" value="EF-hand"/>
    <property type="match status" value="2"/>
</dbReference>
<dbReference type="PROSITE" id="PS00018">
    <property type="entry name" value="EF_HAND_1"/>
    <property type="match status" value="4"/>
</dbReference>
<dbReference type="PROSITE" id="PS50222">
    <property type="entry name" value="EF_HAND_2"/>
    <property type="match status" value="6"/>
</dbReference>
<feature type="signal peptide" evidence="1">
    <location>
        <begin position="1"/>
        <end position="19"/>
    </location>
</feature>
<feature type="chain" id="PRO_0000364196" description="Calumenin-B">
    <location>
        <begin position="20"/>
        <end position="316"/>
    </location>
</feature>
<feature type="domain" description="EF-hand 1" evidence="4">
    <location>
        <begin position="69"/>
        <end position="104"/>
    </location>
</feature>
<feature type="domain" description="EF-hand 2" evidence="4">
    <location>
        <begin position="105"/>
        <end position="140"/>
    </location>
</feature>
<feature type="domain" description="EF-hand 3" evidence="4">
    <location>
        <begin position="152"/>
        <end position="187"/>
    </location>
</feature>
<feature type="domain" description="EF-hand 4" evidence="4">
    <location>
        <begin position="189"/>
        <end position="224"/>
    </location>
</feature>
<feature type="domain" description="EF-hand 5" evidence="4">
    <location>
        <begin position="230"/>
        <end position="265"/>
    </location>
</feature>
<feature type="domain" description="EF-hand 6" evidence="4">
    <location>
        <begin position="266"/>
        <end position="301"/>
    </location>
</feature>
<feature type="short sequence motif" description="Prevents secretion from ER" evidence="1">
    <location>
        <begin position="313"/>
        <end position="316"/>
    </location>
</feature>
<feature type="binding site" evidence="4">
    <location>
        <position position="82"/>
    </location>
    <ligand>
        <name>Ca(2+)</name>
        <dbReference type="ChEBI" id="CHEBI:29108"/>
        <label>1</label>
    </ligand>
</feature>
<feature type="binding site" evidence="4">
    <location>
        <position position="84"/>
    </location>
    <ligand>
        <name>Ca(2+)</name>
        <dbReference type="ChEBI" id="CHEBI:29108"/>
        <label>1</label>
    </ligand>
</feature>
<feature type="binding site" evidence="4">
    <location>
        <position position="86"/>
    </location>
    <ligand>
        <name>Ca(2+)</name>
        <dbReference type="ChEBI" id="CHEBI:29108"/>
        <label>1</label>
    </ligand>
</feature>
<feature type="binding site" evidence="4">
    <location>
        <position position="88"/>
    </location>
    <ligand>
        <name>Ca(2+)</name>
        <dbReference type="ChEBI" id="CHEBI:29108"/>
        <label>1</label>
    </ligand>
</feature>
<feature type="binding site" evidence="4">
    <location>
        <position position="93"/>
    </location>
    <ligand>
        <name>Ca(2+)</name>
        <dbReference type="ChEBI" id="CHEBI:29108"/>
        <label>1</label>
    </ligand>
</feature>
<feature type="binding site" evidence="4">
    <location>
        <position position="118"/>
    </location>
    <ligand>
        <name>Ca(2+)</name>
        <dbReference type="ChEBI" id="CHEBI:29108"/>
        <label>2</label>
    </ligand>
</feature>
<feature type="binding site" evidence="4">
    <location>
        <position position="120"/>
    </location>
    <ligand>
        <name>Ca(2+)</name>
        <dbReference type="ChEBI" id="CHEBI:29108"/>
        <label>2</label>
    </ligand>
</feature>
<feature type="binding site" evidence="4">
    <location>
        <position position="122"/>
    </location>
    <ligand>
        <name>Ca(2+)</name>
        <dbReference type="ChEBI" id="CHEBI:29108"/>
        <label>2</label>
    </ligand>
</feature>
<feature type="binding site" evidence="4">
    <location>
        <position position="129"/>
    </location>
    <ligand>
        <name>Ca(2+)</name>
        <dbReference type="ChEBI" id="CHEBI:29108"/>
        <label>2</label>
    </ligand>
</feature>
<feature type="binding site" evidence="5">
    <location>
        <position position="165"/>
    </location>
    <ligand>
        <name>Ca(2+)</name>
        <dbReference type="ChEBI" id="CHEBI:29108"/>
        <label>3</label>
    </ligand>
</feature>
<feature type="binding site" evidence="5">
    <location>
        <position position="167"/>
    </location>
    <ligand>
        <name>Ca(2+)</name>
        <dbReference type="ChEBI" id="CHEBI:29108"/>
        <label>3</label>
    </ligand>
</feature>
<feature type="binding site" evidence="5">
    <location>
        <position position="169"/>
    </location>
    <ligand>
        <name>Ca(2+)</name>
        <dbReference type="ChEBI" id="CHEBI:29108"/>
        <label>3</label>
    </ligand>
</feature>
<feature type="binding site" evidence="5">
    <location>
        <position position="171"/>
    </location>
    <ligand>
        <name>Ca(2+)</name>
        <dbReference type="ChEBI" id="CHEBI:29108"/>
        <label>3</label>
    </ligand>
</feature>
<feature type="binding site" evidence="5">
    <location>
        <position position="176"/>
    </location>
    <ligand>
        <name>Ca(2+)</name>
        <dbReference type="ChEBI" id="CHEBI:29108"/>
        <label>3</label>
    </ligand>
</feature>
<feature type="binding site" evidence="4">
    <location>
        <position position="202"/>
    </location>
    <ligand>
        <name>Ca(2+)</name>
        <dbReference type="ChEBI" id="CHEBI:29108"/>
        <label>4</label>
    </ligand>
</feature>
<feature type="binding site" evidence="4">
    <location>
        <position position="204"/>
    </location>
    <ligand>
        <name>Ca(2+)</name>
        <dbReference type="ChEBI" id="CHEBI:29108"/>
        <label>4</label>
    </ligand>
</feature>
<feature type="binding site" evidence="4">
    <location>
        <position position="206"/>
    </location>
    <ligand>
        <name>Ca(2+)</name>
        <dbReference type="ChEBI" id="CHEBI:29108"/>
        <label>4</label>
    </ligand>
</feature>
<feature type="binding site" evidence="4">
    <location>
        <position position="213"/>
    </location>
    <ligand>
        <name>Ca(2+)</name>
        <dbReference type="ChEBI" id="CHEBI:29108"/>
        <label>4</label>
    </ligand>
</feature>
<feature type="binding site" evidence="5">
    <location>
        <position position="243"/>
    </location>
    <ligand>
        <name>Ca(2+)</name>
        <dbReference type="ChEBI" id="CHEBI:29108"/>
        <label>5</label>
    </ligand>
</feature>
<feature type="binding site" evidence="5">
    <location>
        <position position="245"/>
    </location>
    <ligand>
        <name>Ca(2+)</name>
        <dbReference type="ChEBI" id="CHEBI:29108"/>
        <label>5</label>
    </ligand>
</feature>
<feature type="binding site" evidence="5">
    <location>
        <position position="247"/>
    </location>
    <ligand>
        <name>Ca(2+)</name>
        <dbReference type="ChEBI" id="CHEBI:29108"/>
        <label>5</label>
    </ligand>
</feature>
<feature type="binding site" evidence="5">
    <location>
        <position position="249"/>
    </location>
    <ligand>
        <name>Ca(2+)</name>
        <dbReference type="ChEBI" id="CHEBI:29108"/>
        <label>5</label>
    </ligand>
</feature>
<feature type="binding site" evidence="5">
    <location>
        <position position="254"/>
    </location>
    <ligand>
        <name>Ca(2+)</name>
        <dbReference type="ChEBI" id="CHEBI:29108"/>
        <label>5</label>
    </ligand>
</feature>
<feature type="binding site" evidence="4">
    <location>
        <position position="279"/>
    </location>
    <ligand>
        <name>Ca(2+)</name>
        <dbReference type="ChEBI" id="CHEBI:29108"/>
        <label>6</label>
    </ligand>
</feature>
<feature type="binding site" evidence="4">
    <location>
        <position position="281"/>
    </location>
    <ligand>
        <name>Ca(2+)</name>
        <dbReference type="ChEBI" id="CHEBI:29108"/>
        <label>6</label>
    </ligand>
</feature>
<feature type="binding site" evidence="4">
    <location>
        <position position="283"/>
    </location>
    <ligand>
        <name>Ca(2+)</name>
        <dbReference type="ChEBI" id="CHEBI:29108"/>
        <label>6</label>
    </ligand>
</feature>
<feature type="binding site" evidence="4">
    <location>
        <position position="285"/>
    </location>
    <ligand>
        <name>Ca(2+)</name>
        <dbReference type="ChEBI" id="CHEBI:29108"/>
        <label>6</label>
    </ligand>
</feature>
<feature type="binding site" evidence="4">
    <location>
        <position position="290"/>
    </location>
    <ligand>
        <name>Ca(2+)</name>
        <dbReference type="ChEBI" id="CHEBI:29108"/>
        <label>6</label>
    </ligand>
</feature>
<feature type="glycosylation site" description="N-linked (GlcNAc...) asparagine" evidence="3">
    <location>
        <position position="132"/>
    </location>
</feature>
<name>CALUB_SALSA</name>
<sequence length="316" mass="37278">MELRPLVMCFALCVVYASSKPTIEKKDRVHHDDPLSSRDHEDAENFDYDHEAFLGQDEAKTFDQLTPEESKERLGMLVERIDEDKDGYVSVEEMKKWIKHSQKRWIYDDVDRQWKGHDHNGDGLVSWEEYKNATYGYILDDPDPEDGFSYRQMISRDERRFKMSDLDADLKANKEEFTAFLHPEEYDHMKDIVVLETMEDIDKNGDGFIDLEEYIGDMYNQEGDPSEPEWVRTEREQFTEFRDTNKDGRMDKEETKDWILPSDYDHAEAEAKHLVYESDNDKDGKLTKAEIVEKYDLFVGSQATDFGEALARHDEF</sequence>
<reference key="1">
    <citation type="journal article" date="2010" name="BMC Genomics">
        <title>Salmo salar and Esox lucius full-length cDNA sequences reveal changes in evolutionary pressures on a post-tetraploidization genome.</title>
        <authorList>
            <person name="Leong J.S."/>
            <person name="Jantzen S.G."/>
            <person name="von Schalburg K.R."/>
            <person name="Cooper G.A."/>
            <person name="Messmer A.M."/>
            <person name="Liao N.Y."/>
            <person name="Munro S."/>
            <person name="Moore R."/>
            <person name="Holt R.A."/>
            <person name="Jones S.J."/>
            <person name="Davidson W.S."/>
            <person name="Koop B.F."/>
        </authorList>
    </citation>
    <scope>NUCLEOTIDE SEQUENCE [LARGE SCALE MRNA]</scope>
    <source>
        <tissue>Brain</tissue>
    </source>
</reference>
<evidence type="ECO:0000250" key="1"/>
<evidence type="ECO:0000250" key="2">
    <source>
        <dbReference type="UniProtKB" id="O43852"/>
    </source>
</evidence>
<evidence type="ECO:0000255" key="3"/>
<evidence type="ECO:0000255" key="4">
    <source>
        <dbReference type="PROSITE-ProRule" id="PRU00448"/>
    </source>
</evidence>
<evidence type="ECO:0000305" key="5"/>